<sequence>MSGSTGERSFADIITSIRYWVIHSITIPSLFIAGWLFVSTGLAYDVFGSPRPNEYFTESRQGIPLITDRFDSLEQLDEFSRSF</sequence>
<organism>
    <name type="scientific">Sorghum bicolor</name>
    <name type="common">Sorghum</name>
    <name type="synonym">Sorghum vulgare</name>
    <dbReference type="NCBI Taxonomy" id="4558"/>
    <lineage>
        <taxon>Eukaryota</taxon>
        <taxon>Viridiplantae</taxon>
        <taxon>Streptophyta</taxon>
        <taxon>Embryophyta</taxon>
        <taxon>Tracheophyta</taxon>
        <taxon>Spermatophyta</taxon>
        <taxon>Magnoliopsida</taxon>
        <taxon>Liliopsida</taxon>
        <taxon>Poales</taxon>
        <taxon>Poaceae</taxon>
        <taxon>PACMAD clade</taxon>
        <taxon>Panicoideae</taxon>
        <taxon>Andropogonodae</taxon>
        <taxon>Andropogoneae</taxon>
        <taxon>Sorghinae</taxon>
        <taxon>Sorghum</taxon>
    </lineage>
</organism>
<evidence type="ECO:0000255" key="1">
    <source>
        <dbReference type="HAMAP-Rule" id="MF_00642"/>
    </source>
</evidence>
<name>PSBE_SORBI</name>
<protein>
    <recommendedName>
        <fullName evidence="1">Cytochrome b559 subunit alpha</fullName>
    </recommendedName>
    <alternativeName>
        <fullName evidence="1">PSII reaction center subunit V</fullName>
    </alternativeName>
</protein>
<feature type="chain" id="PRO_0000275718" description="Cytochrome b559 subunit alpha">
    <location>
        <begin position="1"/>
        <end position="83"/>
    </location>
</feature>
<feature type="transmembrane region" description="Helical" evidence="1">
    <location>
        <begin position="21"/>
        <end position="35"/>
    </location>
</feature>
<feature type="binding site" description="axial binding residue" evidence="1">
    <location>
        <position position="23"/>
    </location>
    <ligand>
        <name>heme</name>
        <dbReference type="ChEBI" id="CHEBI:30413"/>
        <note>ligand shared with beta subunit</note>
    </ligand>
    <ligandPart>
        <name>Fe</name>
        <dbReference type="ChEBI" id="CHEBI:18248"/>
    </ligandPart>
</feature>
<reference key="1">
    <citation type="journal article" date="2007" name="Theor. Appl. Genet.">
        <title>Complete chloroplast genome sequences of Hordeum vulgare, Sorghum bicolor and Agrostis stolonifera, and comparative analyses with other grass genomes.</title>
        <authorList>
            <person name="Saski C."/>
            <person name="Lee S.-B."/>
            <person name="Fjellheim S."/>
            <person name="Guda C."/>
            <person name="Jansen R.K."/>
            <person name="Luo H."/>
            <person name="Tomkins J."/>
            <person name="Rognli O.A."/>
            <person name="Daniell H."/>
            <person name="Clarke J.L."/>
        </authorList>
    </citation>
    <scope>NUCLEOTIDE SEQUENCE [LARGE SCALE GENOMIC DNA]</scope>
    <source>
        <strain>cv. BTx623</strain>
    </source>
</reference>
<geneLocation type="chloroplast"/>
<comment type="function">
    <text evidence="1">This b-type cytochrome is tightly associated with the reaction center of photosystem II (PSII). PSII is a light-driven water:plastoquinone oxidoreductase that uses light energy to abstract electrons from H(2)O, generating O(2) and a proton gradient subsequently used for ATP formation. It consists of a core antenna complex that captures photons, and an electron transfer chain that converts photonic excitation into a charge separation.</text>
</comment>
<comment type="cofactor">
    <cofactor evidence="1">
        <name>heme b</name>
        <dbReference type="ChEBI" id="CHEBI:60344"/>
    </cofactor>
    <text evidence="1">With its partner (PsbF) binds heme. PSII binds additional chlorophylls, carotenoids and specific lipids.</text>
</comment>
<comment type="subunit">
    <text evidence="1">Heterodimer of an alpha subunit and a beta subunit. PSII is composed of 1 copy each of membrane proteins PsbA, PsbB, PsbC, PsbD, PsbE, PsbF, PsbH, PsbI, PsbJ, PsbK, PsbL, PsbM, PsbT, PsbX, PsbY, PsbZ, Psb30/Ycf12, at least 3 peripheral proteins of the oxygen-evolving complex and a large number of cofactors. It forms dimeric complexes.</text>
</comment>
<comment type="subcellular location">
    <subcellularLocation>
        <location evidence="1">Plastid</location>
        <location evidence="1">Chloroplast thylakoid membrane</location>
        <topology evidence="1">Single-pass membrane protein</topology>
    </subcellularLocation>
</comment>
<comment type="similarity">
    <text evidence="1">Belongs to the PsbE/PsbF family.</text>
</comment>
<keyword id="KW-0150">Chloroplast</keyword>
<keyword id="KW-0249">Electron transport</keyword>
<keyword id="KW-0349">Heme</keyword>
<keyword id="KW-0408">Iron</keyword>
<keyword id="KW-0472">Membrane</keyword>
<keyword id="KW-0479">Metal-binding</keyword>
<keyword id="KW-0602">Photosynthesis</keyword>
<keyword id="KW-0604">Photosystem II</keyword>
<keyword id="KW-0934">Plastid</keyword>
<keyword id="KW-1185">Reference proteome</keyword>
<keyword id="KW-0793">Thylakoid</keyword>
<keyword id="KW-0812">Transmembrane</keyword>
<keyword id="KW-1133">Transmembrane helix</keyword>
<keyword id="KW-0813">Transport</keyword>
<dbReference type="EMBL" id="EF115542">
    <property type="protein sequence ID" value="ABK79513.1"/>
    <property type="molecule type" value="Genomic_DNA"/>
</dbReference>
<dbReference type="RefSeq" id="YP_899424.1">
    <property type="nucleotide sequence ID" value="NC_008602.1"/>
</dbReference>
<dbReference type="SMR" id="A1E9U1"/>
<dbReference type="FunCoup" id="A1E9U1">
    <property type="interactions" value="27"/>
</dbReference>
<dbReference type="STRING" id="4558.A1E9U1"/>
<dbReference type="GeneID" id="4549176"/>
<dbReference type="KEGG" id="sbi:4549176"/>
<dbReference type="InParanoid" id="A1E9U1"/>
<dbReference type="OrthoDB" id="722814at2759"/>
<dbReference type="Proteomes" id="UP000000768">
    <property type="component" value="Chloroplast"/>
</dbReference>
<dbReference type="GO" id="GO:0009535">
    <property type="term" value="C:chloroplast thylakoid membrane"/>
    <property type="evidence" value="ECO:0007669"/>
    <property type="project" value="UniProtKB-SubCell"/>
</dbReference>
<dbReference type="GO" id="GO:0009539">
    <property type="term" value="C:photosystem II reaction center"/>
    <property type="evidence" value="ECO:0007669"/>
    <property type="project" value="InterPro"/>
</dbReference>
<dbReference type="GO" id="GO:0009055">
    <property type="term" value="F:electron transfer activity"/>
    <property type="evidence" value="ECO:0007669"/>
    <property type="project" value="UniProtKB-UniRule"/>
</dbReference>
<dbReference type="GO" id="GO:0020037">
    <property type="term" value="F:heme binding"/>
    <property type="evidence" value="ECO:0007669"/>
    <property type="project" value="InterPro"/>
</dbReference>
<dbReference type="GO" id="GO:0005506">
    <property type="term" value="F:iron ion binding"/>
    <property type="evidence" value="ECO:0007669"/>
    <property type="project" value="UniProtKB-UniRule"/>
</dbReference>
<dbReference type="GO" id="GO:0009767">
    <property type="term" value="P:photosynthetic electron transport chain"/>
    <property type="evidence" value="ECO:0007669"/>
    <property type="project" value="InterPro"/>
</dbReference>
<dbReference type="Gene3D" id="1.20.5.860">
    <property type="entry name" value="Photosystem II cytochrome b559, alpha subunit"/>
    <property type="match status" value="1"/>
</dbReference>
<dbReference type="HAMAP" id="MF_00642">
    <property type="entry name" value="PSII_PsbE"/>
    <property type="match status" value="1"/>
</dbReference>
<dbReference type="InterPro" id="IPR006217">
    <property type="entry name" value="PSII_cyt_b559_asu"/>
</dbReference>
<dbReference type="InterPro" id="IPR037025">
    <property type="entry name" value="PSII_cyt_b559_asu_sf"/>
</dbReference>
<dbReference type="InterPro" id="IPR006216">
    <property type="entry name" value="PSII_cyt_b559_CS"/>
</dbReference>
<dbReference type="InterPro" id="IPR013081">
    <property type="entry name" value="PSII_cyt_b559_N"/>
</dbReference>
<dbReference type="InterPro" id="IPR013082">
    <property type="entry name" value="PSII_cytb559_asu_lum"/>
</dbReference>
<dbReference type="NCBIfam" id="TIGR01332">
    <property type="entry name" value="cyt_b559_alpha"/>
    <property type="match status" value="1"/>
</dbReference>
<dbReference type="PANTHER" id="PTHR33391:SF13">
    <property type="entry name" value="CYTOCHROME B559 SUBUNIT ALPHA"/>
    <property type="match status" value="1"/>
</dbReference>
<dbReference type="PANTHER" id="PTHR33391">
    <property type="entry name" value="CYTOCHROME B559 SUBUNIT BETA-RELATED"/>
    <property type="match status" value="1"/>
</dbReference>
<dbReference type="Pfam" id="PF00283">
    <property type="entry name" value="Cytochrom_B559"/>
    <property type="match status" value="1"/>
</dbReference>
<dbReference type="Pfam" id="PF00284">
    <property type="entry name" value="Cytochrom_B559a"/>
    <property type="match status" value="1"/>
</dbReference>
<dbReference type="PIRSF" id="PIRSF000036">
    <property type="entry name" value="PsbE"/>
    <property type="match status" value="1"/>
</dbReference>
<dbReference type="SUPFAM" id="SSF161045">
    <property type="entry name" value="Cytochrome b559 subunits"/>
    <property type="match status" value="1"/>
</dbReference>
<dbReference type="PROSITE" id="PS00537">
    <property type="entry name" value="CYTOCHROME_B559"/>
    <property type="match status" value="1"/>
</dbReference>
<proteinExistence type="inferred from homology"/>
<gene>
    <name evidence="1" type="primary">psbE</name>
</gene>
<accession>A1E9U1</accession>